<keyword id="KW-0028">Amino-acid biosynthesis</keyword>
<keyword id="KW-0413">Isomerase</keyword>
<name>HYDRA_RHIML</name>
<sequence>MHIHLINPNSTASMTAQALESALLVKHAHTHVSASNPTDTPASIEGGADEAMSVPGMLAEIRQGEAQGVDAYVIACFDDPGLHAAREVAKGPVIGICQAAVQVAMTISRRFSVITTLPRSVPIIEDLVSDYGAERHCRKVRAIDLPVLALEEDPQRAERLLLKEIEIAKAEDGAEAIVLGCAGMSSLCDRLQKATGVPVIDGVTAAVKMAEALLGAGYATSKVNTYAYPRIKAAAGHKVCA</sequence>
<reference key="1">
    <citation type="journal article" date="2004" name="Appl. Environ. Microbiol.">
        <title>Molecular cloning, purification, and biochemical characterization of hydantoin racemase from the legume symbiont Sinorhizobium meliloti CECT 4114.</title>
        <authorList>
            <person name="Martinez-Rodriguez S."/>
            <person name="Las Heras-Vazquez F.J."/>
            <person name="Mingorance-Cazorla L."/>
            <person name="Clemente-Jimenez J.M."/>
            <person name="Rodriguez-Vico F."/>
        </authorList>
    </citation>
    <scope>NUCLEOTIDE SEQUENCE [GENOMIC DNA]</scope>
    <scope>FUNCTION</scope>
    <scope>CATALYTIC ACTIVITY</scope>
    <scope>BIOPHYSICOCHEMICAL PROPERTIES</scope>
    <scope>ACTIVITY REGULATION</scope>
    <scope>SUBSTRATE SPECIFICITY</scope>
    <scope>SUBUNIT</scope>
    <source>
        <strain>CECT 4114</strain>
    </source>
</reference>
<reference key="2">
    <citation type="journal article" date="2006" name="Protein Sci.">
        <title>Site-directed mutagenesis indicates an important role of cysteines 76 and 181 in the catalysis of hydantoin racemase from Sinorhizobium meliloti.</title>
        <authorList>
            <person name="Martinez-Rodriguez S."/>
            <person name="Andujar-Sanchez M."/>
            <person name="Neira J.L."/>
            <person name="Clemente-Jimenez J.M."/>
            <person name="Jara-Perez V."/>
            <person name="Rodriguez-Vico F."/>
            <person name="Las Heras-Vazquez F.J."/>
        </authorList>
    </citation>
    <scope>MUTAGENESIS OF CYS-76 AND CYS-181</scope>
    <source>
        <strain>CECT 4114</strain>
    </source>
</reference>
<reference key="3">
    <citation type="journal article" date="2008" name="Acta Crystallogr. F">
        <title>Crystallization and preliminary crystallographic studies of an active-site mutant hydantoin racemase from Sinorhizobium meliloti CECT4114.</title>
        <authorList>
            <person name="Martinez-Rodriguez S."/>
            <person name="Gonzalez-Ramirez L.A."/>
            <person name="Clemente-Jimenez J.M."/>
            <person name="Rodriguez-Vico F."/>
            <person name="Las Heras-Vazquez F.J."/>
            <person name="Gavira J.A."/>
            <person name="Garcia-Ruiz J.M."/>
        </authorList>
    </citation>
    <scope>CRYSTALLIZATION</scope>
    <source>
        <strain>CECT 4114</strain>
    </source>
</reference>
<gene>
    <name evidence="3" type="primary">hyuA</name>
</gene>
<evidence type="ECO:0000269" key="1">
    <source>
    </source>
</evidence>
<evidence type="ECO:0000269" key="2">
    <source>
    </source>
</evidence>
<evidence type="ECO:0000303" key="3">
    <source>
    </source>
</evidence>
<evidence type="ECO:0000305" key="4"/>
<evidence type="ECO:0000305" key="5">
    <source>
    </source>
</evidence>
<comment type="function">
    <text evidence="1">May be involved in the asymmetric conversion of racemic 5-substituted hydantoins to the corresponding L-amino acids. Catalyzes the racemization via enolization of D- and L-5-monosubstituted hydantoins.</text>
</comment>
<comment type="catalytic activity">
    <reaction evidence="1">
        <text>a D-5-monosubstituted hydantoin = a L-5-monosubstituted hydantoin</text>
        <dbReference type="Rhea" id="RHEA:46624"/>
        <dbReference type="ChEBI" id="CHEBI:86339"/>
        <dbReference type="ChEBI" id="CHEBI:86340"/>
        <dbReference type="EC" id="5.1.99.5"/>
    </reaction>
</comment>
<comment type="catalytic activity">
    <reaction evidence="1">
        <text>D-5-benzylhydantoin = L-5-benzylhydantoin</text>
        <dbReference type="Rhea" id="RHEA:83991"/>
        <dbReference type="ChEBI" id="CHEBI:176864"/>
        <dbReference type="ChEBI" id="CHEBI:233540"/>
    </reaction>
</comment>
<comment type="catalytic activity">
    <reaction evidence="1">
        <text>D-5-isobutylhydantoin = L-5-isobutylhydantoin</text>
        <dbReference type="Rhea" id="RHEA:84231"/>
        <dbReference type="ChEBI" id="CHEBI:233609"/>
        <dbReference type="ChEBI" id="CHEBI:233610"/>
    </reaction>
</comment>
<comment type="activity regulation">
    <text evidence="1">Inhibited by Cu(2+), Hg(2+), Pb(2+) and Zn(2+). The activity is twofold lower in the presence of Mn(2+), Co(2+) and Ni(2+). The insignificant effect of the metal chelating agent EDTA on the hydantoin racemase activity would indicate that it is not a metalloenzyme.</text>
</comment>
<comment type="biophysicochemical properties">
    <kinetics>
        <KM evidence="1">3.76 mM for D-5-isobutylhydantoin (D-IBH)</KM>
        <KM evidence="1">6.41 mM for L-5-isobutylhydantoin (L-IBH)</KM>
        <KM evidence="1">8.3 mM for L-5-benzylhydantoin (L-BH)</KM>
        <KM evidence="1">13.89 mM for D-5-benzylhydantoin (D-BH)</KM>
        <KM evidence="1">17.32 mM for L-5-ethylhydantoin (L-EH)</KM>
        <text evidence="1">kcat is 6.42 sec(-1) with L-5-ethylhydantoin (L-EH) as substrate. kcat is 3.24 sec(-1) with D-5-isobutylhydantoin (D-IBH) as substrate. kcat is 2.29 sec(-1) with D-5-benzylhydantoin (D-BH) as substrate. kcat is 2.12 sec(-1) with L-5-isobutylhydantoin (L-IBH) as substrate. kcat is 1.94 sec(-1) with L-5-benzylhydantoin (L-BH) as substrate.</text>
    </kinetics>
    <phDependence>
        <text evidence="1">Optimum pH is 8.5.</text>
    </phDependence>
    <temperatureDependence>
        <text evidence="1">The activity is gradually lost at temperatures of more than 30 degrees Celsius.</text>
    </temperatureDependence>
</comment>
<comment type="subunit">
    <text evidence="1">Homotetramer.</text>
</comment>
<comment type="similarity">
    <text evidence="4">Belongs to the HyuE racemase family.</text>
</comment>
<feature type="chain" id="PRO_0000439848" description="Hydantoin racemase">
    <location>
        <begin position="1"/>
        <end position="241"/>
    </location>
</feature>
<feature type="site" description="Seems to be responsible for recognition and proton retrieval of D-isomers" evidence="5">
    <location>
        <position position="76"/>
    </location>
</feature>
<feature type="site" description="Seems to be responsible for L-isomers recognition and racemization" evidence="5">
    <location>
        <position position="181"/>
    </location>
</feature>
<feature type="mutagenesis site" description="The secondary and the tertiary structure are not significantly affected." evidence="2">
    <original>C</original>
    <variation>A</variation>
    <location>
        <position position="76"/>
    </location>
</feature>
<feature type="mutagenesis site" description="The secondary and the tertiary structure are not significantly affected." evidence="2">
    <original>C</original>
    <variation>A</variation>
    <location>
        <position position="181"/>
    </location>
</feature>
<dbReference type="EC" id="5.1.99.5" evidence="1"/>
<dbReference type="EMBL" id="AY393697">
    <property type="protein sequence ID" value="AAQ93382.1"/>
    <property type="molecule type" value="Genomic_DNA"/>
</dbReference>
<dbReference type="RefSeq" id="WP_004434222.1">
    <property type="nucleotide sequence ID" value="NZ_WISY01000131.1"/>
</dbReference>
<dbReference type="SMR" id="Q6TMG4"/>
<dbReference type="STRING" id="382.DU99_14415"/>
<dbReference type="PATRIC" id="fig|382.52.peg.2934"/>
<dbReference type="OMA" id="AMHTASH"/>
<dbReference type="GO" id="GO:0047661">
    <property type="term" value="F:amino-acid racemase activity"/>
    <property type="evidence" value="ECO:0007669"/>
    <property type="project" value="InterPro"/>
</dbReference>
<dbReference type="GO" id="GO:0036348">
    <property type="term" value="F:hydantoin racemase activity"/>
    <property type="evidence" value="ECO:0000250"/>
    <property type="project" value="UniProtKB"/>
</dbReference>
<dbReference type="GO" id="GO:0008652">
    <property type="term" value="P:amino acid biosynthetic process"/>
    <property type="evidence" value="ECO:0007669"/>
    <property type="project" value="UniProtKB-KW"/>
</dbReference>
<dbReference type="FunFam" id="3.40.50.12500:FF:000001">
    <property type="entry name" value="Putative hydantoin racemase"/>
    <property type="match status" value="1"/>
</dbReference>
<dbReference type="Gene3D" id="3.40.50.12500">
    <property type="match status" value="1"/>
</dbReference>
<dbReference type="InterPro" id="IPR015942">
    <property type="entry name" value="Asp/Glu/hydantoin_racemase"/>
</dbReference>
<dbReference type="InterPro" id="IPR001920">
    <property type="entry name" value="Asp/Glu_race"/>
</dbReference>
<dbReference type="InterPro" id="IPR052186">
    <property type="entry name" value="Hydantoin_racemase-like"/>
</dbReference>
<dbReference type="InterPro" id="IPR053714">
    <property type="entry name" value="Iso_Racemase_Enz_sf"/>
</dbReference>
<dbReference type="PANTHER" id="PTHR28047">
    <property type="entry name" value="PROTEIN DCG1"/>
    <property type="match status" value="1"/>
</dbReference>
<dbReference type="PANTHER" id="PTHR28047:SF5">
    <property type="entry name" value="PROTEIN DCG1"/>
    <property type="match status" value="1"/>
</dbReference>
<dbReference type="Pfam" id="PF01177">
    <property type="entry name" value="Asp_Glu_race"/>
    <property type="match status" value="1"/>
</dbReference>
<dbReference type="SUPFAM" id="SSF53681">
    <property type="entry name" value="Aspartate/glutamate racemase"/>
    <property type="match status" value="1"/>
</dbReference>
<protein>
    <recommendedName>
        <fullName evidence="3">Hydantoin racemase</fullName>
        <ecNumber evidence="1">5.1.99.5</ecNumber>
    </recommendedName>
</protein>
<proteinExistence type="evidence at protein level"/>
<accession>Q6TMG4</accession>
<organism>
    <name type="scientific">Rhizobium meliloti</name>
    <name type="common">Ensifer meliloti</name>
    <name type="synonym">Sinorhizobium meliloti</name>
    <dbReference type="NCBI Taxonomy" id="382"/>
    <lineage>
        <taxon>Bacteria</taxon>
        <taxon>Pseudomonadati</taxon>
        <taxon>Pseudomonadota</taxon>
        <taxon>Alphaproteobacteria</taxon>
        <taxon>Hyphomicrobiales</taxon>
        <taxon>Rhizobiaceae</taxon>
        <taxon>Sinorhizobium/Ensifer group</taxon>
        <taxon>Sinorhizobium</taxon>
    </lineage>
</organism>